<organism>
    <name type="scientific">Escherichia coli O157:H7</name>
    <dbReference type="NCBI Taxonomy" id="83334"/>
    <lineage>
        <taxon>Bacteria</taxon>
        <taxon>Pseudomonadati</taxon>
        <taxon>Pseudomonadota</taxon>
        <taxon>Gammaproteobacteria</taxon>
        <taxon>Enterobacterales</taxon>
        <taxon>Enterobacteriaceae</taxon>
        <taxon>Escherichia</taxon>
    </lineage>
</organism>
<name>DXS_ECO57</name>
<evidence type="ECO:0000250" key="1"/>
<evidence type="ECO:0000255" key="2">
    <source>
        <dbReference type="HAMAP-Rule" id="MF_00315"/>
    </source>
</evidence>
<protein>
    <recommendedName>
        <fullName evidence="2">1-deoxy-D-xylulose-5-phosphate synthase</fullName>
        <ecNumber evidence="2">2.2.1.7</ecNumber>
    </recommendedName>
    <alternativeName>
        <fullName evidence="2">1-deoxyxylulose-5-phosphate synthase</fullName>
        <shortName evidence="2">DXP synthase</shortName>
        <shortName evidence="2">DXPS</shortName>
    </alternativeName>
</protein>
<proteinExistence type="inferred from homology"/>
<dbReference type="EC" id="2.2.1.7" evidence="2"/>
<dbReference type="EMBL" id="AE005174">
    <property type="protein sequence ID" value="AAG54770.1"/>
    <property type="molecule type" value="Genomic_DNA"/>
</dbReference>
<dbReference type="EMBL" id="BA000007">
    <property type="protein sequence ID" value="BAB33897.1"/>
    <property type="molecule type" value="Genomic_DNA"/>
</dbReference>
<dbReference type="PIR" id="B90688">
    <property type="entry name" value="B90688"/>
</dbReference>
<dbReference type="PIR" id="F85538">
    <property type="entry name" value="F85538"/>
</dbReference>
<dbReference type="RefSeq" id="NP_308501.1">
    <property type="nucleotide sequence ID" value="NC_002695.1"/>
</dbReference>
<dbReference type="RefSeq" id="WP_000006821.1">
    <property type="nucleotide sequence ID" value="NZ_VOAI01000005.1"/>
</dbReference>
<dbReference type="SMR" id="Q8XE76"/>
<dbReference type="STRING" id="155864.Z0523"/>
<dbReference type="GeneID" id="914576"/>
<dbReference type="KEGG" id="ece:Z0523"/>
<dbReference type="KEGG" id="ecs:ECs_0474"/>
<dbReference type="PATRIC" id="fig|386585.9.peg.574"/>
<dbReference type="eggNOG" id="COG1154">
    <property type="taxonomic scope" value="Bacteria"/>
</dbReference>
<dbReference type="HOGENOM" id="CLU_009227_1_4_6"/>
<dbReference type="OMA" id="QVGYHAQ"/>
<dbReference type="UniPathway" id="UPA00064">
    <property type="reaction ID" value="UER00091"/>
</dbReference>
<dbReference type="Proteomes" id="UP000000558">
    <property type="component" value="Chromosome"/>
</dbReference>
<dbReference type="Proteomes" id="UP000002519">
    <property type="component" value="Chromosome"/>
</dbReference>
<dbReference type="GO" id="GO:0005829">
    <property type="term" value="C:cytosol"/>
    <property type="evidence" value="ECO:0007669"/>
    <property type="project" value="TreeGrafter"/>
</dbReference>
<dbReference type="GO" id="GO:0008661">
    <property type="term" value="F:1-deoxy-D-xylulose-5-phosphate synthase activity"/>
    <property type="evidence" value="ECO:0007669"/>
    <property type="project" value="UniProtKB-UniRule"/>
</dbReference>
<dbReference type="GO" id="GO:0000287">
    <property type="term" value="F:magnesium ion binding"/>
    <property type="evidence" value="ECO:0007669"/>
    <property type="project" value="UniProtKB-UniRule"/>
</dbReference>
<dbReference type="GO" id="GO:0030976">
    <property type="term" value="F:thiamine pyrophosphate binding"/>
    <property type="evidence" value="ECO:0007669"/>
    <property type="project" value="UniProtKB-UniRule"/>
</dbReference>
<dbReference type="GO" id="GO:0052865">
    <property type="term" value="P:1-deoxy-D-xylulose 5-phosphate biosynthetic process"/>
    <property type="evidence" value="ECO:0007669"/>
    <property type="project" value="UniProtKB-UniPathway"/>
</dbReference>
<dbReference type="GO" id="GO:0019288">
    <property type="term" value="P:isopentenyl diphosphate biosynthetic process, methylerythritol 4-phosphate pathway"/>
    <property type="evidence" value="ECO:0007669"/>
    <property type="project" value="TreeGrafter"/>
</dbReference>
<dbReference type="GO" id="GO:0016114">
    <property type="term" value="P:terpenoid biosynthetic process"/>
    <property type="evidence" value="ECO:0007669"/>
    <property type="project" value="UniProtKB-UniRule"/>
</dbReference>
<dbReference type="GO" id="GO:0009228">
    <property type="term" value="P:thiamine biosynthetic process"/>
    <property type="evidence" value="ECO:0007669"/>
    <property type="project" value="UniProtKB-UniRule"/>
</dbReference>
<dbReference type="CDD" id="cd02007">
    <property type="entry name" value="TPP_DXS"/>
    <property type="match status" value="1"/>
</dbReference>
<dbReference type="CDD" id="cd07033">
    <property type="entry name" value="TPP_PYR_DXS_TK_like"/>
    <property type="match status" value="1"/>
</dbReference>
<dbReference type="FunFam" id="3.40.50.920:FF:000002">
    <property type="entry name" value="1-deoxy-D-xylulose-5-phosphate synthase"/>
    <property type="match status" value="1"/>
</dbReference>
<dbReference type="FunFam" id="3.40.50.970:FF:000005">
    <property type="entry name" value="1-deoxy-D-xylulose-5-phosphate synthase"/>
    <property type="match status" value="1"/>
</dbReference>
<dbReference type="Gene3D" id="3.40.50.920">
    <property type="match status" value="1"/>
</dbReference>
<dbReference type="Gene3D" id="3.40.50.970">
    <property type="match status" value="2"/>
</dbReference>
<dbReference type="HAMAP" id="MF_00315">
    <property type="entry name" value="DXP_synth"/>
    <property type="match status" value="1"/>
</dbReference>
<dbReference type="InterPro" id="IPR005477">
    <property type="entry name" value="Dxylulose-5-P_synthase"/>
</dbReference>
<dbReference type="InterPro" id="IPR029061">
    <property type="entry name" value="THDP-binding"/>
</dbReference>
<dbReference type="InterPro" id="IPR009014">
    <property type="entry name" value="Transketo_C/PFOR_II"/>
</dbReference>
<dbReference type="InterPro" id="IPR005475">
    <property type="entry name" value="Transketolase-like_Pyr-bd"/>
</dbReference>
<dbReference type="InterPro" id="IPR020826">
    <property type="entry name" value="Transketolase_BS"/>
</dbReference>
<dbReference type="InterPro" id="IPR033248">
    <property type="entry name" value="Transketolase_C"/>
</dbReference>
<dbReference type="InterPro" id="IPR049557">
    <property type="entry name" value="Transketolase_CS"/>
</dbReference>
<dbReference type="NCBIfam" id="TIGR00204">
    <property type="entry name" value="dxs"/>
    <property type="match status" value="1"/>
</dbReference>
<dbReference type="NCBIfam" id="NF003933">
    <property type="entry name" value="PRK05444.2-2"/>
    <property type="match status" value="1"/>
</dbReference>
<dbReference type="PANTHER" id="PTHR43322">
    <property type="entry name" value="1-D-DEOXYXYLULOSE 5-PHOSPHATE SYNTHASE-RELATED"/>
    <property type="match status" value="1"/>
</dbReference>
<dbReference type="PANTHER" id="PTHR43322:SF5">
    <property type="entry name" value="1-DEOXY-D-XYLULOSE-5-PHOSPHATE SYNTHASE, CHLOROPLASTIC"/>
    <property type="match status" value="1"/>
</dbReference>
<dbReference type="Pfam" id="PF13292">
    <property type="entry name" value="DXP_synthase_N"/>
    <property type="match status" value="1"/>
</dbReference>
<dbReference type="Pfam" id="PF02779">
    <property type="entry name" value="Transket_pyr"/>
    <property type="match status" value="1"/>
</dbReference>
<dbReference type="Pfam" id="PF02780">
    <property type="entry name" value="Transketolase_C"/>
    <property type="match status" value="1"/>
</dbReference>
<dbReference type="SMART" id="SM00861">
    <property type="entry name" value="Transket_pyr"/>
    <property type="match status" value="1"/>
</dbReference>
<dbReference type="SUPFAM" id="SSF52518">
    <property type="entry name" value="Thiamin diphosphate-binding fold (THDP-binding)"/>
    <property type="match status" value="2"/>
</dbReference>
<dbReference type="SUPFAM" id="SSF52922">
    <property type="entry name" value="TK C-terminal domain-like"/>
    <property type="match status" value="1"/>
</dbReference>
<dbReference type="PROSITE" id="PS00801">
    <property type="entry name" value="TRANSKETOLASE_1"/>
    <property type="match status" value="1"/>
</dbReference>
<dbReference type="PROSITE" id="PS00802">
    <property type="entry name" value="TRANSKETOLASE_2"/>
    <property type="match status" value="1"/>
</dbReference>
<reference key="1">
    <citation type="journal article" date="2001" name="Nature">
        <title>Genome sequence of enterohaemorrhagic Escherichia coli O157:H7.</title>
        <authorList>
            <person name="Perna N.T."/>
            <person name="Plunkett G. III"/>
            <person name="Burland V."/>
            <person name="Mau B."/>
            <person name="Glasner J.D."/>
            <person name="Rose D.J."/>
            <person name="Mayhew G.F."/>
            <person name="Evans P.S."/>
            <person name="Gregor J."/>
            <person name="Kirkpatrick H.A."/>
            <person name="Posfai G."/>
            <person name="Hackett J."/>
            <person name="Klink S."/>
            <person name="Boutin A."/>
            <person name="Shao Y."/>
            <person name="Miller L."/>
            <person name="Grotbeck E.J."/>
            <person name="Davis N.W."/>
            <person name="Lim A."/>
            <person name="Dimalanta E.T."/>
            <person name="Potamousis K."/>
            <person name="Apodaca J."/>
            <person name="Anantharaman T.S."/>
            <person name="Lin J."/>
            <person name="Yen G."/>
            <person name="Schwartz D.C."/>
            <person name="Welch R.A."/>
            <person name="Blattner F.R."/>
        </authorList>
    </citation>
    <scope>NUCLEOTIDE SEQUENCE [LARGE SCALE GENOMIC DNA]</scope>
    <source>
        <strain>O157:H7 / EDL933 / ATCC 700927 / EHEC</strain>
    </source>
</reference>
<reference key="2">
    <citation type="journal article" date="2001" name="DNA Res.">
        <title>Complete genome sequence of enterohemorrhagic Escherichia coli O157:H7 and genomic comparison with a laboratory strain K-12.</title>
        <authorList>
            <person name="Hayashi T."/>
            <person name="Makino K."/>
            <person name="Ohnishi M."/>
            <person name="Kurokawa K."/>
            <person name="Ishii K."/>
            <person name="Yokoyama K."/>
            <person name="Han C.-G."/>
            <person name="Ohtsubo E."/>
            <person name="Nakayama K."/>
            <person name="Murata T."/>
            <person name="Tanaka M."/>
            <person name="Tobe T."/>
            <person name="Iida T."/>
            <person name="Takami H."/>
            <person name="Honda T."/>
            <person name="Sasakawa C."/>
            <person name="Ogasawara N."/>
            <person name="Yasunaga T."/>
            <person name="Kuhara S."/>
            <person name="Shiba T."/>
            <person name="Hattori M."/>
            <person name="Shinagawa H."/>
        </authorList>
    </citation>
    <scope>NUCLEOTIDE SEQUENCE [LARGE SCALE GENOMIC DNA]</scope>
    <source>
        <strain>O157:H7 / Sakai / RIMD 0509952 / EHEC</strain>
    </source>
</reference>
<accession>Q8XE76</accession>
<keyword id="KW-0414">Isoprene biosynthesis</keyword>
<keyword id="KW-0460">Magnesium</keyword>
<keyword id="KW-0479">Metal-binding</keyword>
<keyword id="KW-1185">Reference proteome</keyword>
<keyword id="KW-0784">Thiamine biosynthesis</keyword>
<keyword id="KW-0786">Thiamine pyrophosphate</keyword>
<keyword id="KW-0808">Transferase</keyword>
<feature type="initiator methionine" description="Removed" evidence="1">
    <location>
        <position position="1"/>
    </location>
</feature>
<feature type="chain" id="PRO_0000189113" description="1-deoxy-D-xylulose-5-phosphate synthase">
    <location>
        <begin position="2"/>
        <end position="620"/>
    </location>
</feature>
<feature type="binding site" evidence="2">
    <location>
        <position position="80"/>
    </location>
    <ligand>
        <name>thiamine diphosphate</name>
        <dbReference type="ChEBI" id="CHEBI:58937"/>
    </ligand>
</feature>
<feature type="binding site" evidence="2">
    <location>
        <begin position="121"/>
        <end position="123"/>
    </location>
    <ligand>
        <name>thiamine diphosphate</name>
        <dbReference type="ChEBI" id="CHEBI:58937"/>
    </ligand>
</feature>
<feature type="binding site" evidence="2">
    <location>
        <position position="152"/>
    </location>
    <ligand>
        <name>Mg(2+)</name>
        <dbReference type="ChEBI" id="CHEBI:18420"/>
    </ligand>
</feature>
<feature type="binding site" evidence="2">
    <location>
        <begin position="153"/>
        <end position="154"/>
    </location>
    <ligand>
        <name>thiamine diphosphate</name>
        <dbReference type="ChEBI" id="CHEBI:58937"/>
    </ligand>
</feature>
<feature type="binding site" evidence="2">
    <location>
        <position position="181"/>
    </location>
    <ligand>
        <name>Mg(2+)</name>
        <dbReference type="ChEBI" id="CHEBI:18420"/>
    </ligand>
</feature>
<feature type="binding site" evidence="2">
    <location>
        <position position="181"/>
    </location>
    <ligand>
        <name>thiamine diphosphate</name>
        <dbReference type="ChEBI" id="CHEBI:58937"/>
    </ligand>
</feature>
<feature type="binding site" evidence="2">
    <location>
        <position position="288"/>
    </location>
    <ligand>
        <name>thiamine diphosphate</name>
        <dbReference type="ChEBI" id="CHEBI:58937"/>
    </ligand>
</feature>
<feature type="binding site" evidence="2">
    <location>
        <position position="370"/>
    </location>
    <ligand>
        <name>thiamine diphosphate</name>
        <dbReference type="ChEBI" id="CHEBI:58937"/>
    </ligand>
</feature>
<gene>
    <name evidence="2" type="primary">dxs</name>
    <name type="ordered locus">Z0523</name>
    <name type="ordered locus">ECs0474</name>
</gene>
<comment type="function">
    <text evidence="2">Catalyzes the acyloin condensation reaction between C atoms 2 and 3 of pyruvate and glyceraldehyde 3-phosphate to yield 1-deoxy-D-xylulose-5-phosphate (DXP).</text>
</comment>
<comment type="catalytic activity">
    <reaction evidence="2">
        <text>D-glyceraldehyde 3-phosphate + pyruvate + H(+) = 1-deoxy-D-xylulose 5-phosphate + CO2</text>
        <dbReference type="Rhea" id="RHEA:12605"/>
        <dbReference type="ChEBI" id="CHEBI:15361"/>
        <dbReference type="ChEBI" id="CHEBI:15378"/>
        <dbReference type="ChEBI" id="CHEBI:16526"/>
        <dbReference type="ChEBI" id="CHEBI:57792"/>
        <dbReference type="ChEBI" id="CHEBI:59776"/>
        <dbReference type="EC" id="2.2.1.7"/>
    </reaction>
</comment>
<comment type="cofactor">
    <cofactor evidence="2">
        <name>Mg(2+)</name>
        <dbReference type="ChEBI" id="CHEBI:18420"/>
    </cofactor>
    <text evidence="2">Binds 1 Mg(2+) ion per subunit.</text>
</comment>
<comment type="cofactor">
    <cofactor evidence="2">
        <name>thiamine diphosphate</name>
        <dbReference type="ChEBI" id="CHEBI:58937"/>
    </cofactor>
    <text evidence="2">Binds 1 thiamine pyrophosphate per subunit.</text>
</comment>
<comment type="pathway">
    <text evidence="2">Metabolic intermediate biosynthesis; 1-deoxy-D-xylulose 5-phosphate biosynthesis; 1-deoxy-D-xylulose 5-phosphate from D-glyceraldehyde 3-phosphate and pyruvate: step 1/1.</text>
</comment>
<comment type="subunit">
    <text evidence="2">Homodimer.</text>
</comment>
<comment type="similarity">
    <text evidence="2">Belongs to the transketolase family. DXPS subfamily.</text>
</comment>
<sequence>MSFDIAKYPTLALVDSTQELRLLPKESLPKLCDELRRYLLDSVSRSSGHFASGLGTVELTVALHYVYNTPFDQLIWDVGHQAYPHKILTGRRDKIGTIRQKGGLHPFPWRGESEYDVLSVGHSSTSISAGIGIAVAAEKEGKNRRTVCVIGDGAITAGMAFEAMNHAGDIRPDMLVVLNDNEMSISENVGALNNHLAQLLSGKLYSSLREGGKKVFSGVPPIKELLKRTEEHIKGMVVPGTLFEELGFNYIGPVDGHDVLGLITTLKNMRDLKGPQFLHIMTKKGRGYEPAEKDPITFHAVPKFDPSSGCLPKSSGGLPSYSKIFGDWLCETAAKDNKLMAITPAMREGSGMVEFSRKFPDRYFDVAIAEQHAVTFAAGLAIGGYKPIVAIYSTFLQRAYDQVLHDVAIQKLPVLFAIDRAGIVGADGQTHQGAFDLSYLRCIPEMVIMTPSDENECRQMLYTGYHYNDGPSAVRYPRGNAVGVELTPLEKLPIGKGIVKRRGEKLAILNFGTLMPEAAKVAESLNATLVDMRFVKPLDETLILEMAASHEALVTVEENAIMGGAGSGVNEVLMAHRKPVPVLNIGLPDFFIPQGTQEEMRAELGLDAAGMEAKIKAWLA</sequence>